<feature type="signal peptide" evidence="1">
    <location>
        <begin position="1"/>
        <end position="29"/>
    </location>
</feature>
<feature type="chain" id="PRO_0000203019" description="Alpha-1,2-mannosyltransferase MNN5">
    <location>
        <begin position="30"/>
        <end position="586"/>
    </location>
</feature>
<feature type="glycosylation site" description="N-linked (GlcNAc...) asparagine" evidence="1">
    <location>
        <position position="113"/>
    </location>
</feature>
<feature type="glycosylation site" description="N-linked (GlcNAc...) asparagine" evidence="1">
    <location>
        <position position="136"/>
    </location>
</feature>
<feature type="glycosylation site" description="N-linked (GlcNAc...) asparagine" evidence="1">
    <location>
        <position position="259"/>
    </location>
</feature>
<feature type="glycosylation site" description="N-linked (GlcNAc...) asparagine" evidence="1">
    <location>
        <position position="264"/>
    </location>
</feature>
<feature type="sequence conflict" description="In Ref. 1; CAA89481." evidence="8" ref="1">
    <original>V</original>
    <variation>F</variation>
    <location>
        <position position="395"/>
    </location>
</feature>
<organism>
    <name type="scientific">Saccharomyces cerevisiae (strain ATCC 204508 / S288c)</name>
    <name type="common">Baker's yeast</name>
    <dbReference type="NCBI Taxonomy" id="559292"/>
    <lineage>
        <taxon>Eukaryota</taxon>
        <taxon>Fungi</taxon>
        <taxon>Dikarya</taxon>
        <taxon>Ascomycota</taxon>
        <taxon>Saccharomycotina</taxon>
        <taxon>Saccharomycetes</taxon>
        <taxon>Saccharomycetales</taxon>
        <taxon>Saccharomycetaceae</taxon>
        <taxon>Saccharomyces</taxon>
    </lineage>
</organism>
<evidence type="ECO:0000255" key="1"/>
<evidence type="ECO:0000269" key="2">
    <source>
    </source>
</evidence>
<evidence type="ECO:0000269" key="3">
    <source>
    </source>
</evidence>
<evidence type="ECO:0000269" key="4">
    <source>
    </source>
</evidence>
<evidence type="ECO:0000269" key="5">
    <source>
    </source>
</evidence>
<evidence type="ECO:0000269" key="6">
    <source>
    </source>
</evidence>
<evidence type="ECO:0000269" key="7">
    <source>
    </source>
</evidence>
<evidence type="ECO:0000305" key="8"/>
<gene>
    <name type="primary">MNN5</name>
    <name type="ordered locus">YJL186W</name>
    <name type="ORF">J0409</name>
</gene>
<reference key="1">
    <citation type="journal article" date="1996" name="EMBO J.">
        <title>Complete nucleotide sequence of Saccharomyces cerevisiae chromosome X.</title>
        <authorList>
            <person name="Galibert F."/>
            <person name="Alexandraki D."/>
            <person name="Baur A."/>
            <person name="Boles E."/>
            <person name="Chalwatzis N."/>
            <person name="Chuat J.-C."/>
            <person name="Coster F."/>
            <person name="Cziepluch C."/>
            <person name="de Haan M."/>
            <person name="Domdey H."/>
            <person name="Durand P."/>
            <person name="Entian K.-D."/>
            <person name="Gatius M."/>
            <person name="Goffeau A."/>
            <person name="Grivell L.A."/>
            <person name="Hennemann A."/>
            <person name="Herbert C.J."/>
            <person name="Heumann K."/>
            <person name="Hilger F."/>
            <person name="Hollenberg C.P."/>
            <person name="Huang M.-E."/>
            <person name="Jacq C."/>
            <person name="Jauniaux J.-C."/>
            <person name="Katsoulou C."/>
            <person name="Kirchrath L."/>
            <person name="Kleine K."/>
            <person name="Kordes E."/>
            <person name="Koetter P."/>
            <person name="Liebl S."/>
            <person name="Louis E.J."/>
            <person name="Manus V."/>
            <person name="Mewes H.-W."/>
            <person name="Miosga T."/>
            <person name="Obermaier B."/>
            <person name="Perea J."/>
            <person name="Pohl T.M."/>
            <person name="Portetelle D."/>
            <person name="Pujol A."/>
            <person name="Purnelle B."/>
            <person name="Ramezani Rad M."/>
            <person name="Rasmussen S.W."/>
            <person name="Rose M."/>
            <person name="Rossau R."/>
            <person name="Schaaff-Gerstenschlaeger I."/>
            <person name="Smits P.H.M."/>
            <person name="Scarcez T."/>
            <person name="Soriano N."/>
            <person name="To Van D."/>
            <person name="Tzermia M."/>
            <person name="Van Broekhoven A."/>
            <person name="Vandenbol M."/>
            <person name="Wedler H."/>
            <person name="von Wettstein D."/>
            <person name="Wambutt R."/>
            <person name="Zagulski M."/>
            <person name="Zollner A."/>
            <person name="Karpfinger-Hartl L."/>
        </authorList>
    </citation>
    <scope>NUCLEOTIDE SEQUENCE [LARGE SCALE GENOMIC DNA]</scope>
    <source>
        <strain>ATCC 204508 / S288c</strain>
    </source>
</reference>
<reference key="2">
    <citation type="journal article" date="2014" name="G3 (Bethesda)">
        <title>The reference genome sequence of Saccharomyces cerevisiae: Then and now.</title>
        <authorList>
            <person name="Engel S.R."/>
            <person name="Dietrich F.S."/>
            <person name="Fisk D.G."/>
            <person name="Binkley G."/>
            <person name="Balakrishnan R."/>
            <person name="Costanzo M.C."/>
            <person name="Dwight S.S."/>
            <person name="Hitz B.C."/>
            <person name="Karra K."/>
            <person name="Nash R.S."/>
            <person name="Weng S."/>
            <person name="Wong E.D."/>
            <person name="Lloyd P."/>
            <person name="Skrzypek M.S."/>
            <person name="Miyasato S.R."/>
            <person name="Simison M."/>
            <person name="Cherry J.M."/>
        </authorList>
    </citation>
    <scope>GENOME REANNOTATION</scope>
    <scope>SEQUENCE REVISION TO 395</scope>
    <source>
        <strain>ATCC 204508 / S288c</strain>
    </source>
</reference>
<reference key="3">
    <citation type="journal article" date="1980" name="J. Biol. Chem.">
        <title>Saccharomyces cerevisiae mannoprotein mutants. Isolation of the mnn5 mutant and comparison with the mnn3 strain.</title>
        <authorList>
            <person name="Cohen R.E."/>
            <person name="Ballou L."/>
            <person name="Ballou C.E."/>
        </authorList>
    </citation>
    <scope>FUNCTION</scope>
</reference>
<reference key="4">
    <citation type="journal article" date="1982" name="J. Biol. Chem.">
        <title>Effects of mannoprotein mutations on Saccharomyces cerevisiae core oligosaccharide structure.</title>
        <authorList>
            <person name="Cohen R.E."/>
            <person name="Zhang W."/>
            <person name="Ballou C.E."/>
        </authorList>
    </citation>
    <scope>FUNCTION</scope>
</reference>
<reference key="5">
    <citation type="journal article" date="1998" name="J. Biol. Chem.">
        <title>Identification of the MNN2 and MNN5 mannosyltransferases required for forming and extending the mannose branches of the outer chain mannans of Saccharomyces cerevisiae.</title>
        <authorList>
            <person name="Rayner J.C."/>
            <person name="Munro S."/>
        </authorList>
    </citation>
    <scope>FUNCTION</scope>
    <scope>GLYCOSYLATION</scope>
    <scope>SUBCELLULAR LOCATION</scope>
</reference>
<reference key="6">
    <citation type="journal article" date="2003" name="Nature">
        <title>Global analysis of protein localization in budding yeast.</title>
        <authorList>
            <person name="Huh W.-K."/>
            <person name="Falvo J.V."/>
            <person name="Gerke L.C."/>
            <person name="Carroll A.S."/>
            <person name="Howson R.W."/>
            <person name="Weissman J.S."/>
            <person name="O'Shea E.K."/>
        </authorList>
    </citation>
    <scope>SUBCELLULAR LOCATION [LARGE SCALE ANALYSIS]</scope>
</reference>
<reference key="7">
    <citation type="journal article" date="2010" name="J. Biol. Chem.">
        <title>Svp26 facilitates endoplasmic reticulum to Golgi transport of a set of mannosyltransferases in Saccharomyces cerevisiae.</title>
        <authorList>
            <person name="Noda Y."/>
            <person name="Yoda K."/>
        </authorList>
    </citation>
    <scope>SUBCELLULAR LOCATION</scope>
    <scope>INTERACTION WITH SVP26</scope>
</reference>
<reference key="8">
    <citation type="journal article" date="2003" name="Nature">
        <title>Global analysis of protein expression in yeast.</title>
        <authorList>
            <person name="Ghaemmaghami S."/>
            <person name="Huh W.-K."/>
            <person name="Bower K."/>
            <person name="Howson R.W."/>
            <person name="Belle A."/>
            <person name="Dephoure N."/>
            <person name="O'Shea E.K."/>
            <person name="Weissman J.S."/>
        </authorList>
    </citation>
    <scope>LEVEL OF PROTEIN EXPRESSION [LARGE SCALE ANALYSIS]</scope>
</reference>
<protein>
    <recommendedName>
        <fullName>Alpha-1,2-mannosyltransferase MNN5</fullName>
        <ecNumber>2.4.1.-</ecNumber>
    </recommendedName>
</protein>
<sequence>MLIRLKKRKILQVIVSAVVLILFFCSVHNDVSSSWLYGKKLRLPVLTRSNLKNNFYTTLVQAIVENKPADSSPDLSKLHGAEGCSFANNVAAHDSGHDSDLSYESLSKCYNLNKTVQESLREVHSKFTDTLSGKLNFSIPQREALFSGSEGIVTIGGGKYSVLAYTMIKKLRDTGTTLPIEVIIPPQDEGEDDFCKNWLPKFNGKCIYFSDIVPSKPLSDLKLTHFQLKVFGLIISSFKRIIFLDADNYAVKNLDLAFNTTSFNDTGLILWPDFWRRVTPPAFYNIIGSSINIGKRVRFVSDDISPVSRYDPFVSNSNDYTPKERQEHFLKHVPLHDLDGTMPDLSSESGQMVIDKIRHFNTLLLALYYNVYGPTWYYKMISQGTAGEGDKDTFVAAAHALNMPYYQVRTNFEFDGFFYQKDDYKGLALLQHDFEQDYKQYQKAQQKVKANIEEFSKLDPDYTLDNGFLKTLMVNDDGSDLDIMFIHASFYKADPWTLYHENRFIGPNGEQVRGFRKPHRYGMDFELFLFNDMRGSFCTTPKSQVIKFKYFTDKVNTPEWDAMCEYLTNHVNYLESTHKEAMGEKN</sequence>
<comment type="function">
    <text evidence="5 6 7">Responsible for addition of first and second mannose residues to the outer chain of core N-linked polysaccharides and to O-linked mannotriose. Implicated in late Golgi modifications.</text>
</comment>
<comment type="pathway">
    <text>Protein modification; protein glycosylation.</text>
</comment>
<comment type="subunit">
    <text evidence="4">Interacts with SVP26.</text>
</comment>
<comment type="subcellular location">
    <subcellularLocation>
        <location evidence="2 4 7">Golgi apparatus</location>
        <location evidence="2 4 7">cis-Golgi network</location>
    </subcellularLocation>
    <text>Golgi localization depends on SVP26.</text>
</comment>
<comment type="PTM">
    <text evidence="7">Glycosylated.</text>
</comment>
<comment type="miscellaneous">
    <text evidence="3">Present with 11400 molecules/cell in log phase SD medium.</text>
</comment>
<comment type="similarity">
    <text evidence="8">Belongs to the MNN1/MNT family.</text>
</comment>
<dbReference type="EC" id="2.4.1.-"/>
<dbReference type="EMBL" id="Z49461">
    <property type="protein sequence ID" value="CAA89481.1"/>
    <property type="molecule type" value="Genomic_DNA"/>
</dbReference>
<dbReference type="EMBL" id="BK006943">
    <property type="protein sequence ID" value="DAA08620.2"/>
    <property type="molecule type" value="Genomic_DNA"/>
</dbReference>
<dbReference type="PIR" id="S56969">
    <property type="entry name" value="S56969"/>
</dbReference>
<dbReference type="RefSeq" id="NP_012349.2">
    <property type="nucleotide sequence ID" value="NM_001181619.2"/>
</dbReference>
<dbReference type="BioGRID" id="33576">
    <property type="interactions" value="78"/>
</dbReference>
<dbReference type="DIP" id="DIP-2868N"/>
<dbReference type="FunCoup" id="P46982">
    <property type="interactions" value="73"/>
</dbReference>
<dbReference type="IntAct" id="P46982">
    <property type="interactions" value="13"/>
</dbReference>
<dbReference type="MINT" id="P46982"/>
<dbReference type="STRING" id="4932.YJL186W"/>
<dbReference type="CAZy" id="GT71">
    <property type="family name" value="Glycosyltransferase Family 71"/>
</dbReference>
<dbReference type="GlyCosmos" id="P46982">
    <property type="glycosylation" value="4 sites, No reported glycans"/>
</dbReference>
<dbReference type="GlyGen" id="P46982">
    <property type="glycosylation" value="5 sites"/>
</dbReference>
<dbReference type="PaxDb" id="4932-YJL186W"/>
<dbReference type="PeptideAtlas" id="P46982"/>
<dbReference type="EnsemblFungi" id="YJL186W_mRNA">
    <property type="protein sequence ID" value="YJL186W"/>
    <property type="gene ID" value="YJL186W"/>
</dbReference>
<dbReference type="GeneID" id="853253"/>
<dbReference type="KEGG" id="sce:YJL186W"/>
<dbReference type="AGR" id="SGD:S000003722"/>
<dbReference type="SGD" id="S000003722">
    <property type="gene designation" value="MNN5"/>
</dbReference>
<dbReference type="VEuPathDB" id="FungiDB:YJL186W"/>
<dbReference type="eggNOG" id="ENOG502QTWU">
    <property type="taxonomic scope" value="Eukaryota"/>
</dbReference>
<dbReference type="GeneTree" id="ENSGT00940000176544"/>
<dbReference type="HOGENOM" id="CLU_013298_1_1_1"/>
<dbReference type="InParanoid" id="P46982"/>
<dbReference type="OMA" id="IMFIHAS"/>
<dbReference type="OrthoDB" id="430354at2759"/>
<dbReference type="BioCyc" id="MetaCyc:YJL186W-MONOMER"/>
<dbReference type="BioCyc" id="YEAST:YJL186W-MONOMER"/>
<dbReference type="UniPathway" id="UPA00378"/>
<dbReference type="BioGRID-ORCS" id="853253">
    <property type="hits" value="5 hits in 10 CRISPR screens"/>
</dbReference>
<dbReference type="PRO" id="PR:P46982"/>
<dbReference type="Proteomes" id="UP000002311">
    <property type="component" value="Chromosome X"/>
</dbReference>
<dbReference type="RNAct" id="P46982">
    <property type="molecule type" value="protein"/>
</dbReference>
<dbReference type="GO" id="GO:0005794">
    <property type="term" value="C:Golgi apparatus"/>
    <property type="evidence" value="ECO:0000314"/>
    <property type="project" value="SGD"/>
</dbReference>
<dbReference type="GO" id="GO:0000026">
    <property type="term" value="F:alpha-1,2-mannosyltransferase activity"/>
    <property type="evidence" value="ECO:0000315"/>
    <property type="project" value="SGD"/>
</dbReference>
<dbReference type="GO" id="GO:0046354">
    <property type="term" value="P:mannan biosynthetic process"/>
    <property type="evidence" value="ECO:0000318"/>
    <property type="project" value="GO_Central"/>
</dbReference>
<dbReference type="GO" id="GO:0006486">
    <property type="term" value="P:protein glycosylation"/>
    <property type="evidence" value="ECO:0000315"/>
    <property type="project" value="SGD"/>
</dbReference>
<dbReference type="GO" id="GO:0035268">
    <property type="term" value="P:protein mannosylation"/>
    <property type="evidence" value="ECO:0000318"/>
    <property type="project" value="GO_Central"/>
</dbReference>
<dbReference type="FunFam" id="3.90.550.10:FF:000177">
    <property type="entry name" value="MNN5p Alpha-1,2-mannosyltransferase"/>
    <property type="match status" value="1"/>
</dbReference>
<dbReference type="Gene3D" id="3.90.550.10">
    <property type="entry name" value="Spore Coat Polysaccharide Biosynthesis Protein SpsA, Chain A"/>
    <property type="match status" value="1"/>
</dbReference>
<dbReference type="InterPro" id="IPR022751">
    <property type="entry name" value="Alpha_mannosyltransferase"/>
</dbReference>
<dbReference type="InterPro" id="IPR029044">
    <property type="entry name" value="Nucleotide-diphossugar_trans"/>
</dbReference>
<dbReference type="PANTHER" id="PTHR31646">
    <property type="entry name" value="ALPHA-1,2-MANNOSYLTRANSFERASE MNN2"/>
    <property type="match status" value="1"/>
</dbReference>
<dbReference type="PANTHER" id="PTHR31646:SF6">
    <property type="entry name" value="ALPHA-1,2-MANNOSYLTRANSFERASE MNN5"/>
    <property type="match status" value="1"/>
</dbReference>
<dbReference type="Pfam" id="PF11051">
    <property type="entry name" value="Mannosyl_trans3"/>
    <property type="match status" value="1"/>
</dbReference>
<dbReference type="SUPFAM" id="SSF53448">
    <property type="entry name" value="Nucleotide-diphospho-sugar transferases"/>
    <property type="match status" value="1"/>
</dbReference>
<accession>P46982</accession>
<accession>D6VW04</accession>
<keyword id="KW-0325">Glycoprotein</keyword>
<keyword id="KW-0328">Glycosyltransferase</keyword>
<keyword id="KW-0333">Golgi apparatus</keyword>
<keyword id="KW-1185">Reference proteome</keyword>
<keyword id="KW-0732">Signal</keyword>
<keyword id="KW-0808">Transferase</keyword>
<name>MNN5_YEAST</name>
<proteinExistence type="evidence at protein level"/>